<keyword id="KW-0028">Amino-acid biosynthesis</keyword>
<keyword id="KW-0055">Arginine biosynthesis</keyword>
<keyword id="KW-0067">ATP-binding</keyword>
<keyword id="KW-0963">Cytoplasm</keyword>
<keyword id="KW-0436">Ligase</keyword>
<keyword id="KW-0547">Nucleotide-binding</keyword>
<organism>
    <name type="scientific">Ehrlichia ruminantium (strain Welgevonden)</name>
    <dbReference type="NCBI Taxonomy" id="254945"/>
    <lineage>
        <taxon>Bacteria</taxon>
        <taxon>Pseudomonadati</taxon>
        <taxon>Pseudomonadota</taxon>
        <taxon>Alphaproteobacteria</taxon>
        <taxon>Rickettsiales</taxon>
        <taxon>Anaplasmataceae</taxon>
        <taxon>Ehrlichia</taxon>
    </lineage>
</organism>
<name>ASSY_EHRRW</name>
<dbReference type="EC" id="6.3.4.5" evidence="1"/>
<dbReference type="EMBL" id="CR925678">
    <property type="protein sequence ID" value="CAI26883.1"/>
    <property type="molecule type" value="Genomic_DNA"/>
</dbReference>
<dbReference type="EMBL" id="CR767821">
    <property type="protein sequence ID" value="CAH58099.1"/>
    <property type="molecule type" value="Genomic_DNA"/>
</dbReference>
<dbReference type="RefSeq" id="WP_011155059.1">
    <property type="nucleotide sequence ID" value="NC_005295.2"/>
</dbReference>
<dbReference type="SMR" id="Q5HBF2"/>
<dbReference type="GeneID" id="33057832"/>
<dbReference type="KEGG" id="eru:Erum3770"/>
<dbReference type="KEGG" id="erw:ERWE_CDS_03890"/>
<dbReference type="eggNOG" id="COG0137">
    <property type="taxonomic scope" value="Bacteria"/>
</dbReference>
<dbReference type="HOGENOM" id="CLU_032784_4_2_5"/>
<dbReference type="UniPathway" id="UPA00068">
    <property type="reaction ID" value="UER00113"/>
</dbReference>
<dbReference type="Proteomes" id="UP000001021">
    <property type="component" value="Chromosome"/>
</dbReference>
<dbReference type="GO" id="GO:0005737">
    <property type="term" value="C:cytoplasm"/>
    <property type="evidence" value="ECO:0007669"/>
    <property type="project" value="UniProtKB-SubCell"/>
</dbReference>
<dbReference type="GO" id="GO:0004055">
    <property type="term" value="F:argininosuccinate synthase activity"/>
    <property type="evidence" value="ECO:0007669"/>
    <property type="project" value="UniProtKB-UniRule"/>
</dbReference>
<dbReference type="GO" id="GO:0005524">
    <property type="term" value="F:ATP binding"/>
    <property type="evidence" value="ECO:0007669"/>
    <property type="project" value="UniProtKB-UniRule"/>
</dbReference>
<dbReference type="GO" id="GO:0000053">
    <property type="term" value="P:argininosuccinate metabolic process"/>
    <property type="evidence" value="ECO:0007669"/>
    <property type="project" value="TreeGrafter"/>
</dbReference>
<dbReference type="GO" id="GO:0006526">
    <property type="term" value="P:L-arginine biosynthetic process"/>
    <property type="evidence" value="ECO:0007669"/>
    <property type="project" value="UniProtKB-UniRule"/>
</dbReference>
<dbReference type="GO" id="GO:0000050">
    <property type="term" value="P:urea cycle"/>
    <property type="evidence" value="ECO:0007669"/>
    <property type="project" value="TreeGrafter"/>
</dbReference>
<dbReference type="CDD" id="cd01999">
    <property type="entry name" value="ASS"/>
    <property type="match status" value="1"/>
</dbReference>
<dbReference type="FunFam" id="3.40.50.620:FF:000019">
    <property type="entry name" value="Argininosuccinate synthase"/>
    <property type="match status" value="1"/>
</dbReference>
<dbReference type="FunFam" id="3.90.1260.10:FF:000007">
    <property type="entry name" value="Argininosuccinate synthase"/>
    <property type="match status" value="1"/>
</dbReference>
<dbReference type="Gene3D" id="3.90.1260.10">
    <property type="entry name" value="Argininosuccinate synthetase, chain A, domain 2"/>
    <property type="match status" value="1"/>
</dbReference>
<dbReference type="Gene3D" id="3.40.50.620">
    <property type="entry name" value="HUPs"/>
    <property type="match status" value="1"/>
</dbReference>
<dbReference type="Gene3D" id="1.20.5.470">
    <property type="entry name" value="Single helix bin"/>
    <property type="match status" value="1"/>
</dbReference>
<dbReference type="HAMAP" id="MF_00005">
    <property type="entry name" value="Arg_succ_synth_type1"/>
    <property type="match status" value="1"/>
</dbReference>
<dbReference type="InterPro" id="IPR048268">
    <property type="entry name" value="Arginosuc_syn_C"/>
</dbReference>
<dbReference type="InterPro" id="IPR048267">
    <property type="entry name" value="Arginosuc_syn_N"/>
</dbReference>
<dbReference type="InterPro" id="IPR001518">
    <property type="entry name" value="Arginosuc_synth"/>
</dbReference>
<dbReference type="InterPro" id="IPR018223">
    <property type="entry name" value="Arginosuc_synth_CS"/>
</dbReference>
<dbReference type="InterPro" id="IPR023434">
    <property type="entry name" value="Arginosuc_synth_type_1_subfam"/>
</dbReference>
<dbReference type="InterPro" id="IPR024074">
    <property type="entry name" value="AS_cat/multimer_dom_body"/>
</dbReference>
<dbReference type="InterPro" id="IPR014729">
    <property type="entry name" value="Rossmann-like_a/b/a_fold"/>
</dbReference>
<dbReference type="NCBIfam" id="TIGR00032">
    <property type="entry name" value="argG"/>
    <property type="match status" value="1"/>
</dbReference>
<dbReference type="NCBIfam" id="NF001770">
    <property type="entry name" value="PRK00509.1"/>
    <property type="match status" value="1"/>
</dbReference>
<dbReference type="PANTHER" id="PTHR11587">
    <property type="entry name" value="ARGININOSUCCINATE SYNTHASE"/>
    <property type="match status" value="1"/>
</dbReference>
<dbReference type="PANTHER" id="PTHR11587:SF2">
    <property type="entry name" value="ARGININOSUCCINATE SYNTHASE"/>
    <property type="match status" value="1"/>
</dbReference>
<dbReference type="Pfam" id="PF20979">
    <property type="entry name" value="Arginosuc_syn_C"/>
    <property type="match status" value="1"/>
</dbReference>
<dbReference type="Pfam" id="PF00764">
    <property type="entry name" value="Arginosuc_synth"/>
    <property type="match status" value="1"/>
</dbReference>
<dbReference type="SUPFAM" id="SSF52402">
    <property type="entry name" value="Adenine nucleotide alpha hydrolases-like"/>
    <property type="match status" value="1"/>
</dbReference>
<dbReference type="SUPFAM" id="SSF69864">
    <property type="entry name" value="Argininosuccinate synthetase, C-terminal domain"/>
    <property type="match status" value="1"/>
</dbReference>
<dbReference type="PROSITE" id="PS00564">
    <property type="entry name" value="ARGININOSUCCIN_SYN_1"/>
    <property type="match status" value="1"/>
</dbReference>
<dbReference type="PROSITE" id="PS00565">
    <property type="entry name" value="ARGININOSUCCIN_SYN_2"/>
    <property type="match status" value="1"/>
</dbReference>
<comment type="catalytic activity">
    <reaction evidence="1">
        <text>L-citrulline + L-aspartate + ATP = 2-(N(omega)-L-arginino)succinate + AMP + diphosphate + H(+)</text>
        <dbReference type="Rhea" id="RHEA:10932"/>
        <dbReference type="ChEBI" id="CHEBI:15378"/>
        <dbReference type="ChEBI" id="CHEBI:29991"/>
        <dbReference type="ChEBI" id="CHEBI:30616"/>
        <dbReference type="ChEBI" id="CHEBI:33019"/>
        <dbReference type="ChEBI" id="CHEBI:57472"/>
        <dbReference type="ChEBI" id="CHEBI:57743"/>
        <dbReference type="ChEBI" id="CHEBI:456215"/>
        <dbReference type="EC" id="6.3.4.5"/>
    </reaction>
</comment>
<comment type="pathway">
    <text evidence="1">Amino-acid biosynthesis; L-arginine biosynthesis; L-arginine from L-ornithine and carbamoyl phosphate: step 2/3.</text>
</comment>
<comment type="subunit">
    <text evidence="1">Homotetramer.</text>
</comment>
<comment type="subcellular location">
    <subcellularLocation>
        <location evidence="1">Cytoplasm</location>
    </subcellularLocation>
</comment>
<comment type="similarity">
    <text evidence="1">Belongs to the argininosuccinate synthase family. Type 1 subfamily.</text>
</comment>
<reference key="1">
    <citation type="journal article" date="2005" name="Proc. Natl. Acad. Sci. U.S.A.">
        <title>The genome of the heartwater agent Ehrlichia ruminantium contains multiple tandem repeats of actively variable copy number.</title>
        <authorList>
            <person name="Collins N.E."/>
            <person name="Liebenberg J."/>
            <person name="de Villiers E.P."/>
            <person name="Brayton K.A."/>
            <person name="Louw E."/>
            <person name="Pretorius A."/>
            <person name="Faber F.E."/>
            <person name="van Heerden H."/>
            <person name="Josemans A."/>
            <person name="van Kleef M."/>
            <person name="Steyn H.C."/>
            <person name="van Strijp M.F."/>
            <person name="Zweygarth E."/>
            <person name="Jongejan F."/>
            <person name="Maillard J.C."/>
            <person name="Berthier D."/>
            <person name="Botha M."/>
            <person name="Joubert F."/>
            <person name="Corton C.H."/>
            <person name="Thomson N.R."/>
            <person name="Allsopp M.T."/>
            <person name="Allsopp B.A."/>
        </authorList>
    </citation>
    <scope>NUCLEOTIDE SEQUENCE [LARGE SCALE GENOMIC DNA]</scope>
    <source>
        <strain>Welgevonden</strain>
    </source>
</reference>
<reference key="2">
    <citation type="journal article" date="2006" name="J. Bacteriol.">
        <title>Comparative genomic analysis of three strains of Ehrlichia ruminantium reveals an active process of genome size plasticity.</title>
        <authorList>
            <person name="Frutos R."/>
            <person name="Viari A."/>
            <person name="Ferraz C."/>
            <person name="Morgat A."/>
            <person name="Eychenie S."/>
            <person name="Kandassamy Y."/>
            <person name="Chantal I."/>
            <person name="Bensaid A."/>
            <person name="Coissac E."/>
            <person name="Vachiery N."/>
            <person name="Demaille J."/>
            <person name="Martinez D."/>
        </authorList>
    </citation>
    <scope>NUCLEOTIDE SEQUENCE [LARGE SCALE GENOMIC DNA]</scope>
    <source>
        <strain>Welgevonden</strain>
    </source>
</reference>
<accession>Q5HBF2</accession>
<accession>Q5FDU6</accession>
<gene>
    <name evidence="1" type="primary">argG</name>
    <name type="ordered locus">Erum3770</name>
    <name type="ordered locus">ERWE_CDS_03890</name>
</gene>
<feature type="chain" id="PRO_0000263926" description="Argininosuccinate synthase">
    <location>
        <begin position="1"/>
        <end position="394"/>
    </location>
</feature>
<feature type="binding site" evidence="1">
    <location>
        <begin position="7"/>
        <end position="15"/>
    </location>
    <ligand>
        <name>ATP</name>
        <dbReference type="ChEBI" id="CHEBI:30616"/>
    </ligand>
</feature>
<feature type="binding site" evidence="1">
    <location>
        <position position="34"/>
    </location>
    <ligand>
        <name>ATP</name>
        <dbReference type="ChEBI" id="CHEBI:30616"/>
    </ligand>
</feature>
<feature type="binding site" evidence="1">
    <location>
        <position position="85"/>
    </location>
    <ligand>
        <name>L-citrulline</name>
        <dbReference type="ChEBI" id="CHEBI:57743"/>
    </ligand>
</feature>
<feature type="binding site" evidence="1">
    <location>
        <position position="90"/>
    </location>
    <ligand>
        <name>L-citrulline</name>
        <dbReference type="ChEBI" id="CHEBI:57743"/>
    </ligand>
</feature>
<feature type="binding site" evidence="1">
    <location>
        <position position="115"/>
    </location>
    <ligand>
        <name>ATP</name>
        <dbReference type="ChEBI" id="CHEBI:30616"/>
    </ligand>
</feature>
<feature type="binding site" evidence="1">
    <location>
        <position position="117"/>
    </location>
    <ligand>
        <name>L-aspartate</name>
        <dbReference type="ChEBI" id="CHEBI:29991"/>
    </ligand>
</feature>
<feature type="binding site" evidence="1">
    <location>
        <position position="121"/>
    </location>
    <ligand>
        <name>L-aspartate</name>
        <dbReference type="ChEBI" id="CHEBI:29991"/>
    </ligand>
</feature>
<feature type="binding site" evidence="1">
    <location>
        <position position="121"/>
    </location>
    <ligand>
        <name>L-citrulline</name>
        <dbReference type="ChEBI" id="CHEBI:57743"/>
    </ligand>
</feature>
<feature type="binding site" evidence="1">
    <location>
        <position position="122"/>
    </location>
    <ligand>
        <name>L-aspartate</name>
        <dbReference type="ChEBI" id="CHEBI:29991"/>
    </ligand>
</feature>
<feature type="binding site" evidence="1">
    <location>
        <position position="125"/>
    </location>
    <ligand>
        <name>L-citrulline</name>
        <dbReference type="ChEBI" id="CHEBI:57743"/>
    </ligand>
</feature>
<feature type="binding site" evidence="1">
    <location>
        <position position="176"/>
    </location>
    <ligand>
        <name>L-citrulline</name>
        <dbReference type="ChEBI" id="CHEBI:57743"/>
    </ligand>
</feature>
<feature type="binding site" evidence="1">
    <location>
        <position position="185"/>
    </location>
    <ligand>
        <name>L-citrulline</name>
        <dbReference type="ChEBI" id="CHEBI:57743"/>
    </ligand>
</feature>
<feature type="binding site" evidence="1">
    <location>
        <position position="261"/>
    </location>
    <ligand>
        <name>L-citrulline</name>
        <dbReference type="ChEBI" id="CHEBI:57743"/>
    </ligand>
</feature>
<feature type="binding site" evidence="1">
    <location>
        <position position="273"/>
    </location>
    <ligand>
        <name>L-citrulline</name>
        <dbReference type="ChEBI" id="CHEBI:57743"/>
    </ligand>
</feature>
<protein>
    <recommendedName>
        <fullName evidence="1">Argininosuccinate synthase</fullName>
        <ecNumber evidence="1">6.3.4.5</ecNumber>
    </recommendedName>
    <alternativeName>
        <fullName evidence="1">Citrulline--aspartate ligase</fullName>
    </alternativeName>
</protein>
<evidence type="ECO:0000255" key="1">
    <source>
        <dbReference type="HAMAP-Rule" id="MF_00005"/>
    </source>
</evidence>
<sequence length="394" mass="44594">MKKIVLAYSGGLDTSVILKWLQENYNCEVVVFTADIGQEDDMSVIQKKAAALNVKEIFIEDLKEEFVRDFVFPMFRANTIYEGYYLLGTSIARPLIAKRQIEIAHLTGADAVAHGATGKGNDQVRFEFGYYCCDPNIKVIAPWRQWELTSRHSLIEYARKNNINVPLDKVNEPPYSIDANLLHISYEGKSLEDPYVEPDYTMLSRSLTPELASSIPEYIEITFEQGDPIAINDISLSPANLLHQLNKIGGKHGIGIVDIVENRYIGIKSRGIYETPGGTILLHAHRAIESITLDRESAHLKDEIMPKYAKLIYNGYWWTTERKMLQSLIDKSQEKVNGTVRIKLYKGSVIVVGRKSNNSLYSYNLASFDSESQGYDHKDAEGFIKVNSLRLKKS</sequence>
<proteinExistence type="inferred from homology"/>